<organism>
    <name type="scientific">Aquifex aeolicus (strain VF5)</name>
    <dbReference type="NCBI Taxonomy" id="224324"/>
    <lineage>
        <taxon>Bacteria</taxon>
        <taxon>Pseudomonadati</taxon>
        <taxon>Aquificota</taxon>
        <taxon>Aquificia</taxon>
        <taxon>Aquificales</taxon>
        <taxon>Aquificaceae</taxon>
        <taxon>Aquifex</taxon>
    </lineage>
</organism>
<feature type="chain" id="PRO_0000186987" description="Uncharacterized protein aq_aa15">
    <location>
        <begin position="1"/>
        <end position="110"/>
    </location>
</feature>
<gene>
    <name type="ordered locus">aq_aa15</name>
</gene>
<accession>O66407</accession>
<protein>
    <recommendedName>
        <fullName>Uncharacterized protein aq_aa15</fullName>
    </recommendedName>
</protein>
<geneLocation type="plasmid">
    <name>ece1</name>
</geneLocation>
<name>YZ15_AQUAE</name>
<evidence type="ECO:0000305" key="1"/>
<dbReference type="EMBL" id="AE000667">
    <property type="protein sequence ID" value="AAC07959.1"/>
    <property type="molecule type" value="Genomic_DNA"/>
</dbReference>
<dbReference type="RefSeq" id="NP_046407.1">
    <property type="nucleotide sequence ID" value="NC_001880.1"/>
</dbReference>
<dbReference type="RefSeq" id="WP_010890553.1">
    <property type="nucleotide sequence ID" value="NC_001880.1"/>
</dbReference>
<dbReference type="SMR" id="O66407"/>
<dbReference type="EnsemblBacteria" id="AAC07959">
    <property type="protein sequence ID" value="AAC07959"/>
    <property type="gene ID" value="aq_aa15"/>
</dbReference>
<dbReference type="KEGG" id="aae:aq_aa15"/>
<dbReference type="eggNOG" id="COG1451">
    <property type="taxonomic scope" value="Bacteria"/>
</dbReference>
<dbReference type="HOGENOM" id="CLU_2067800_0_0_0"/>
<dbReference type="InParanoid" id="O66407"/>
<dbReference type="OrthoDB" id="9810445at2"/>
<dbReference type="Proteomes" id="UP000000798">
    <property type="component" value="Plasmid ece1"/>
</dbReference>
<dbReference type="CDD" id="cd07344">
    <property type="entry name" value="M48_yhfN_like"/>
    <property type="match status" value="1"/>
</dbReference>
<dbReference type="Gene3D" id="3.30.2010.10">
    <property type="entry name" value="Metalloproteases ('zincins'), catalytic domain"/>
    <property type="match status" value="1"/>
</dbReference>
<dbReference type="InterPro" id="IPR008756">
    <property type="entry name" value="Peptidase_M56"/>
</dbReference>
<dbReference type="Pfam" id="PF05569">
    <property type="entry name" value="Peptidase_M56"/>
    <property type="match status" value="1"/>
</dbReference>
<sequence>MKERVENLLKELKERLGIEREVKIELKRFKRKLAPVSLTKRVIYINRELIPKLSDEELGYLIAHELLHLKHGIYHISEFEKELLELSGKDLYLSLYRKTWKGYNFPILQI</sequence>
<reference key="1">
    <citation type="journal article" date="1998" name="Nature">
        <title>The complete genome of the hyperthermophilic bacterium Aquifex aeolicus.</title>
        <authorList>
            <person name="Deckert G."/>
            <person name="Warren P.V."/>
            <person name="Gaasterland T."/>
            <person name="Young W.G."/>
            <person name="Lenox A.L."/>
            <person name="Graham D.E."/>
            <person name="Overbeek R."/>
            <person name="Snead M.A."/>
            <person name="Keller M."/>
            <person name="Aujay M."/>
            <person name="Huber R."/>
            <person name="Feldman R.A."/>
            <person name="Short J.M."/>
            <person name="Olsen G.J."/>
            <person name="Swanson R.V."/>
        </authorList>
    </citation>
    <scope>NUCLEOTIDE SEQUENCE [LARGE SCALE GENOMIC DNA]</scope>
    <source>
        <strain>VF5</strain>
    </source>
</reference>
<keyword id="KW-0614">Plasmid</keyword>
<keyword id="KW-1185">Reference proteome</keyword>
<comment type="similarity">
    <text evidence="1">To M.jannaschii MJ0123 and MJ1213.</text>
</comment>
<proteinExistence type="predicted"/>